<organism>
    <name type="scientific">Rippkaea orientalis (strain PCC 8801 / RF-1)</name>
    <name type="common">Cyanothece sp. (strain PCC 8801)</name>
    <dbReference type="NCBI Taxonomy" id="41431"/>
    <lineage>
        <taxon>Bacteria</taxon>
        <taxon>Bacillati</taxon>
        <taxon>Cyanobacteriota</taxon>
        <taxon>Cyanophyceae</taxon>
        <taxon>Oscillatoriophycideae</taxon>
        <taxon>Chroococcales</taxon>
        <taxon>Aphanothecaceae</taxon>
        <taxon>Rippkaea</taxon>
        <taxon>Rippkaea orientalis</taxon>
    </lineage>
</organism>
<evidence type="ECO:0000255" key="1">
    <source>
        <dbReference type="HAMAP-Rule" id="MF_01864"/>
    </source>
</evidence>
<evidence type="ECO:0000255" key="2">
    <source>
        <dbReference type="PROSITE-ProRule" id="PRU01266"/>
    </source>
</evidence>
<name>MIAB_RIPO1</name>
<keyword id="KW-0004">4Fe-4S</keyword>
<keyword id="KW-0963">Cytoplasm</keyword>
<keyword id="KW-0408">Iron</keyword>
<keyword id="KW-0411">Iron-sulfur</keyword>
<keyword id="KW-0479">Metal-binding</keyword>
<keyword id="KW-1185">Reference proteome</keyword>
<keyword id="KW-0949">S-adenosyl-L-methionine</keyword>
<keyword id="KW-0808">Transferase</keyword>
<keyword id="KW-0819">tRNA processing</keyword>
<proteinExistence type="inferred from homology"/>
<accession>B7JZ48</accession>
<feature type="chain" id="PRO_0000374252" description="tRNA-2-methylthio-N(6)-dimethylallyladenosine synthase">
    <location>
        <begin position="1"/>
        <end position="451"/>
    </location>
</feature>
<feature type="domain" description="MTTase N-terminal" evidence="1">
    <location>
        <begin position="11"/>
        <end position="127"/>
    </location>
</feature>
<feature type="domain" description="Radical SAM core" evidence="2">
    <location>
        <begin position="148"/>
        <end position="385"/>
    </location>
</feature>
<feature type="domain" description="TRAM" evidence="1">
    <location>
        <begin position="388"/>
        <end position="451"/>
    </location>
</feature>
<feature type="binding site" evidence="1">
    <location>
        <position position="20"/>
    </location>
    <ligand>
        <name>[4Fe-4S] cluster</name>
        <dbReference type="ChEBI" id="CHEBI:49883"/>
        <label>1</label>
    </ligand>
</feature>
<feature type="binding site" evidence="1">
    <location>
        <position position="56"/>
    </location>
    <ligand>
        <name>[4Fe-4S] cluster</name>
        <dbReference type="ChEBI" id="CHEBI:49883"/>
        <label>1</label>
    </ligand>
</feature>
<feature type="binding site" evidence="1">
    <location>
        <position position="90"/>
    </location>
    <ligand>
        <name>[4Fe-4S] cluster</name>
        <dbReference type="ChEBI" id="CHEBI:49883"/>
        <label>1</label>
    </ligand>
</feature>
<feature type="binding site" evidence="1">
    <location>
        <position position="162"/>
    </location>
    <ligand>
        <name>[4Fe-4S] cluster</name>
        <dbReference type="ChEBI" id="CHEBI:49883"/>
        <label>2</label>
        <note>4Fe-4S-S-AdoMet</note>
    </ligand>
</feature>
<feature type="binding site" evidence="1">
    <location>
        <position position="166"/>
    </location>
    <ligand>
        <name>[4Fe-4S] cluster</name>
        <dbReference type="ChEBI" id="CHEBI:49883"/>
        <label>2</label>
        <note>4Fe-4S-S-AdoMet</note>
    </ligand>
</feature>
<feature type="binding site" evidence="1">
    <location>
        <position position="169"/>
    </location>
    <ligand>
        <name>[4Fe-4S] cluster</name>
        <dbReference type="ChEBI" id="CHEBI:49883"/>
        <label>2</label>
        <note>4Fe-4S-S-AdoMet</note>
    </ligand>
</feature>
<gene>
    <name evidence="1" type="primary">miaB</name>
    <name type="ordered locus">PCC8801_3288</name>
</gene>
<dbReference type="EC" id="2.8.4.3" evidence="1"/>
<dbReference type="EMBL" id="CP001287">
    <property type="protein sequence ID" value="ACK67259.1"/>
    <property type="molecule type" value="Genomic_DNA"/>
</dbReference>
<dbReference type="SMR" id="B7JZ48"/>
<dbReference type="STRING" id="41431.PCC8801_3288"/>
<dbReference type="KEGG" id="cyp:PCC8801_3288"/>
<dbReference type="eggNOG" id="COG0621">
    <property type="taxonomic scope" value="Bacteria"/>
</dbReference>
<dbReference type="HOGENOM" id="CLU_018697_2_2_3"/>
<dbReference type="Proteomes" id="UP000008204">
    <property type="component" value="Chromosome"/>
</dbReference>
<dbReference type="GO" id="GO:0005737">
    <property type="term" value="C:cytoplasm"/>
    <property type="evidence" value="ECO:0007669"/>
    <property type="project" value="UniProtKB-SubCell"/>
</dbReference>
<dbReference type="GO" id="GO:0051539">
    <property type="term" value="F:4 iron, 4 sulfur cluster binding"/>
    <property type="evidence" value="ECO:0007669"/>
    <property type="project" value="UniProtKB-UniRule"/>
</dbReference>
<dbReference type="GO" id="GO:0046872">
    <property type="term" value="F:metal ion binding"/>
    <property type="evidence" value="ECO:0007669"/>
    <property type="project" value="UniProtKB-KW"/>
</dbReference>
<dbReference type="GO" id="GO:0035596">
    <property type="term" value="F:methylthiotransferase activity"/>
    <property type="evidence" value="ECO:0007669"/>
    <property type="project" value="InterPro"/>
</dbReference>
<dbReference type="GO" id="GO:0035600">
    <property type="term" value="P:tRNA methylthiolation"/>
    <property type="evidence" value="ECO:0007669"/>
    <property type="project" value="TreeGrafter"/>
</dbReference>
<dbReference type="CDD" id="cd01335">
    <property type="entry name" value="Radical_SAM"/>
    <property type="match status" value="1"/>
</dbReference>
<dbReference type="FunFam" id="3.40.50.12160:FF:000006">
    <property type="entry name" value="tRNA-2-methylthio-N(6)-dimethylallyladenosine synthase"/>
    <property type="match status" value="1"/>
</dbReference>
<dbReference type="FunFam" id="3.80.30.20:FF:000001">
    <property type="entry name" value="tRNA-2-methylthio-N(6)-dimethylallyladenosine synthase 2"/>
    <property type="match status" value="1"/>
</dbReference>
<dbReference type="Gene3D" id="3.40.50.12160">
    <property type="entry name" value="Methylthiotransferase, N-terminal domain"/>
    <property type="match status" value="1"/>
</dbReference>
<dbReference type="Gene3D" id="3.80.30.20">
    <property type="entry name" value="tm_1862 like domain"/>
    <property type="match status" value="1"/>
</dbReference>
<dbReference type="HAMAP" id="MF_01864">
    <property type="entry name" value="tRNA_metthiotr_MiaB"/>
    <property type="match status" value="1"/>
</dbReference>
<dbReference type="InterPro" id="IPR006638">
    <property type="entry name" value="Elp3/MiaA/NifB-like_rSAM"/>
</dbReference>
<dbReference type="InterPro" id="IPR005839">
    <property type="entry name" value="Methylthiotransferase"/>
</dbReference>
<dbReference type="InterPro" id="IPR020612">
    <property type="entry name" value="Methylthiotransferase_CS"/>
</dbReference>
<dbReference type="InterPro" id="IPR013848">
    <property type="entry name" value="Methylthiotransferase_N"/>
</dbReference>
<dbReference type="InterPro" id="IPR038135">
    <property type="entry name" value="Methylthiotransferase_N_sf"/>
</dbReference>
<dbReference type="InterPro" id="IPR006463">
    <property type="entry name" value="MiaB_methiolase"/>
</dbReference>
<dbReference type="InterPro" id="IPR007197">
    <property type="entry name" value="rSAM"/>
</dbReference>
<dbReference type="InterPro" id="IPR023404">
    <property type="entry name" value="rSAM_horseshoe"/>
</dbReference>
<dbReference type="InterPro" id="IPR002792">
    <property type="entry name" value="TRAM_dom"/>
</dbReference>
<dbReference type="NCBIfam" id="TIGR01574">
    <property type="entry name" value="miaB-methiolase"/>
    <property type="match status" value="1"/>
</dbReference>
<dbReference type="NCBIfam" id="TIGR00089">
    <property type="entry name" value="MiaB/RimO family radical SAM methylthiotransferase"/>
    <property type="match status" value="1"/>
</dbReference>
<dbReference type="PANTHER" id="PTHR43020">
    <property type="entry name" value="CDK5 REGULATORY SUBUNIT-ASSOCIATED PROTEIN 1"/>
    <property type="match status" value="1"/>
</dbReference>
<dbReference type="PANTHER" id="PTHR43020:SF2">
    <property type="entry name" value="MITOCHONDRIAL TRNA METHYLTHIOTRANSFERASE CDK5RAP1"/>
    <property type="match status" value="1"/>
</dbReference>
<dbReference type="Pfam" id="PF04055">
    <property type="entry name" value="Radical_SAM"/>
    <property type="match status" value="1"/>
</dbReference>
<dbReference type="Pfam" id="PF01938">
    <property type="entry name" value="TRAM"/>
    <property type="match status" value="1"/>
</dbReference>
<dbReference type="Pfam" id="PF00919">
    <property type="entry name" value="UPF0004"/>
    <property type="match status" value="1"/>
</dbReference>
<dbReference type="SFLD" id="SFLDF00273">
    <property type="entry name" value="(dimethylallyl)adenosine_tRNA"/>
    <property type="match status" value="1"/>
</dbReference>
<dbReference type="SFLD" id="SFLDG01082">
    <property type="entry name" value="B12-binding_domain_containing"/>
    <property type="match status" value="1"/>
</dbReference>
<dbReference type="SFLD" id="SFLDG01061">
    <property type="entry name" value="methylthiotransferase"/>
    <property type="match status" value="1"/>
</dbReference>
<dbReference type="SMART" id="SM00729">
    <property type="entry name" value="Elp3"/>
    <property type="match status" value="1"/>
</dbReference>
<dbReference type="SUPFAM" id="SSF102114">
    <property type="entry name" value="Radical SAM enzymes"/>
    <property type="match status" value="1"/>
</dbReference>
<dbReference type="PROSITE" id="PS51449">
    <property type="entry name" value="MTTASE_N"/>
    <property type="match status" value="1"/>
</dbReference>
<dbReference type="PROSITE" id="PS01278">
    <property type="entry name" value="MTTASE_RADICAL"/>
    <property type="match status" value="1"/>
</dbReference>
<dbReference type="PROSITE" id="PS51918">
    <property type="entry name" value="RADICAL_SAM"/>
    <property type="match status" value="1"/>
</dbReference>
<dbReference type="PROSITE" id="PS50926">
    <property type="entry name" value="TRAM"/>
    <property type="match status" value="1"/>
</dbReference>
<comment type="function">
    <text evidence="1">Catalyzes the methylthiolation of N6-(dimethylallyl)adenosine (i(6)A), leading to the formation of 2-methylthio-N6-(dimethylallyl)adenosine (ms(2)i(6)A) at position 37 in tRNAs that read codons beginning with uridine.</text>
</comment>
<comment type="catalytic activity">
    <reaction evidence="1">
        <text>N(6)-dimethylallyladenosine(37) in tRNA + (sulfur carrier)-SH + AH2 + 2 S-adenosyl-L-methionine = 2-methylsulfanyl-N(6)-dimethylallyladenosine(37) in tRNA + (sulfur carrier)-H + 5'-deoxyadenosine + L-methionine + A + S-adenosyl-L-homocysteine + 2 H(+)</text>
        <dbReference type="Rhea" id="RHEA:37067"/>
        <dbReference type="Rhea" id="RHEA-COMP:10375"/>
        <dbReference type="Rhea" id="RHEA-COMP:10376"/>
        <dbReference type="Rhea" id="RHEA-COMP:14737"/>
        <dbReference type="Rhea" id="RHEA-COMP:14739"/>
        <dbReference type="ChEBI" id="CHEBI:13193"/>
        <dbReference type="ChEBI" id="CHEBI:15378"/>
        <dbReference type="ChEBI" id="CHEBI:17319"/>
        <dbReference type="ChEBI" id="CHEBI:17499"/>
        <dbReference type="ChEBI" id="CHEBI:29917"/>
        <dbReference type="ChEBI" id="CHEBI:57844"/>
        <dbReference type="ChEBI" id="CHEBI:57856"/>
        <dbReference type="ChEBI" id="CHEBI:59789"/>
        <dbReference type="ChEBI" id="CHEBI:64428"/>
        <dbReference type="ChEBI" id="CHEBI:74415"/>
        <dbReference type="ChEBI" id="CHEBI:74417"/>
        <dbReference type="EC" id="2.8.4.3"/>
    </reaction>
</comment>
<comment type="cofactor">
    <cofactor evidence="1">
        <name>[4Fe-4S] cluster</name>
        <dbReference type="ChEBI" id="CHEBI:49883"/>
    </cofactor>
    <text evidence="1">Binds 2 [4Fe-4S] clusters. One cluster is coordinated with 3 cysteines and an exchangeable S-adenosyl-L-methionine.</text>
</comment>
<comment type="subunit">
    <text evidence="1">Monomer.</text>
</comment>
<comment type="subcellular location">
    <subcellularLocation>
        <location evidence="1">Cytoplasm</location>
    </subcellularLocation>
</comment>
<comment type="similarity">
    <text evidence="1">Belongs to the methylthiotransferase family. MiaB subfamily.</text>
</comment>
<protein>
    <recommendedName>
        <fullName evidence="1">tRNA-2-methylthio-N(6)-dimethylallyladenosine synthase</fullName>
        <ecNumber evidence="1">2.8.4.3</ecNumber>
    </recommendedName>
    <alternativeName>
        <fullName evidence="1">(Dimethylallyl)adenosine tRNA methylthiotransferase MiaB</fullName>
    </alternativeName>
    <alternativeName>
        <fullName evidence="1">tRNA-i(6)A37 methylthiotransferase</fullName>
    </alternativeName>
</protein>
<sequence>MTPKKMTHYQRHYHITTFGCQMNKADSERMAGILENMGFIWSEDPNQADLILYNTCTIRDNAEQKVYSYLGRQAKRKHENPDLTLIVAGCVAQQEGEQILRRVPELDLVMGPQHANRLEDLLQQVFDGNQVVATEPIHIIEDITKPRRDSTITAWVNVIYGCNERCSYCVVPNVRGVEQSRTPEAILAEMELLGKQGYKEVTLLGQNIDAYGRDLPGVTESGRHQHTLTDLLYTVHDVVGIERIRFATSHPRYFTERLIAACQELSKVCEHFHIPFQSGDNDILKAMKRGYTHEKYRQIIDKIRDYMPDASISADAIVGFPGETEEQFENTLKLVEDIGFDQLNTAAYSPRPGTPAALWDNQLSEEVKSDRLQRLNHLVAQKAAERSQRYLGRIEEVLVEDQNPKDSTQVMGRTRGNRLTFFKGDINQLKGRLIKVKITEVRAFSLTGEIV</sequence>
<reference key="1">
    <citation type="journal article" date="2011" name="MBio">
        <title>Novel metabolic attributes of the genus Cyanothece, comprising a group of unicellular nitrogen-fixing Cyanobacteria.</title>
        <authorList>
            <person name="Bandyopadhyay A."/>
            <person name="Elvitigala T."/>
            <person name="Welsh E."/>
            <person name="Stockel J."/>
            <person name="Liberton M."/>
            <person name="Min H."/>
            <person name="Sherman L.A."/>
            <person name="Pakrasi H.B."/>
        </authorList>
    </citation>
    <scope>NUCLEOTIDE SEQUENCE [LARGE SCALE GENOMIC DNA]</scope>
    <source>
        <strain>PCC 8801 / RF-1</strain>
    </source>
</reference>